<feature type="chain" id="PRO_1000003544" description="Small ribosomal subunit protein bS18">
    <location>
        <begin position="1"/>
        <end position="76"/>
    </location>
</feature>
<dbReference type="EMBL" id="AM421808">
    <property type="protein sequence ID" value="CAM10491.1"/>
    <property type="molecule type" value="Genomic_DNA"/>
</dbReference>
<dbReference type="RefSeq" id="WP_002213306.1">
    <property type="nucleotide sequence ID" value="NC_008767.1"/>
</dbReference>
<dbReference type="SMR" id="A1KUE8"/>
<dbReference type="GeneID" id="93385879"/>
<dbReference type="KEGG" id="nmc:NMC1258"/>
<dbReference type="HOGENOM" id="CLU_148710_2_2_4"/>
<dbReference type="Proteomes" id="UP000002286">
    <property type="component" value="Chromosome"/>
</dbReference>
<dbReference type="GO" id="GO:0022627">
    <property type="term" value="C:cytosolic small ribosomal subunit"/>
    <property type="evidence" value="ECO:0007669"/>
    <property type="project" value="TreeGrafter"/>
</dbReference>
<dbReference type="GO" id="GO:0070181">
    <property type="term" value="F:small ribosomal subunit rRNA binding"/>
    <property type="evidence" value="ECO:0007669"/>
    <property type="project" value="TreeGrafter"/>
</dbReference>
<dbReference type="GO" id="GO:0003735">
    <property type="term" value="F:structural constituent of ribosome"/>
    <property type="evidence" value="ECO:0007669"/>
    <property type="project" value="InterPro"/>
</dbReference>
<dbReference type="GO" id="GO:0006412">
    <property type="term" value="P:translation"/>
    <property type="evidence" value="ECO:0007669"/>
    <property type="project" value="UniProtKB-UniRule"/>
</dbReference>
<dbReference type="FunFam" id="4.10.640.10:FF:000001">
    <property type="entry name" value="30S ribosomal protein S18"/>
    <property type="match status" value="1"/>
</dbReference>
<dbReference type="Gene3D" id="4.10.640.10">
    <property type="entry name" value="Ribosomal protein S18"/>
    <property type="match status" value="1"/>
</dbReference>
<dbReference type="HAMAP" id="MF_00270">
    <property type="entry name" value="Ribosomal_bS18"/>
    <property type="match status" value="1"/>
</dbReference>
<dbReference type="InterPro" id="IPR001648">
    <property type="entry name" value="Ribosomal_bS18"/>
</dbReference>
<dbReference type="InterPro" id="IPR018275">
    <property type="entry name" value="Ribosomal_bS18_CS"/>
</dbReference>
<dbReference type="InterPro" id="IPR036870">
    <property type="entry name" value="Ribosomal_bS18_sf"/>
</dbReference>
<dbReference type="NCBIfam" id="TIGR00165">
    <property type="entry name" value="S18"/>
    <property type="match status" value="1"/>
</dbReference>
<dbReference type="PANTHER" id="PTHR13479">
    <property type="entry name" value="30S RIBOSOMAL PROTEIN S18"/>
    <property type="match status" value="1"/>
</dbReference>
<dbReference type="PANTHER" id="PTHR13479:SF40">
    <property type="entry name" value="SMALL RIBOSOMAL SUBUNIT PROTEIN BS18M"/>
    <property type="match status" value="1"/>
</dbReference>
<dbReference type="Pfam" id="PF01084">
    <property type="entry name" value="Ribosomal_S18"/>
    <property type="match status" value="1"/>
</dbReference>
<dbReference type="PRINTS" id="PR00974">
    <property type="entry name" value="RIBOSOMALS18"/>
</dbReference>
<dbReference type="SUPFAM" id="SSF46911">
    <property type="entry name" value="Ribosomal protein S18"/>
    <property type="match status" value="1"/>
</dbReference>
<dbReference type="PROSITE" id="PS00057">
    <property type="entry name" value="RIBOSOMAL_S18"/>
    <property type="match status" value="1"/>
</dbReference>
<sequence length="76" mass="8993">MARQSFKRRKFCRFTAEKIQEVDYKQVDLLKDFISENGKIIPARITGTKAFYQRQLAVAVKRARFLALLPYTDQHK</sequence>
<protein>
    <recommendedName>
        <fullName evidence="1">Small ribosomal subunit protein bS18</fullName>
    </recommendedName>
    <alternativeName>
        <fullName evidence="2">30S ribosomal protein S18</fullName>
    </alternativeName>
</protein>
<gene>
    <name evidence="1" type="primary">rpsR</name>
    <name type="ordered locus">NMC1258</name>
</gene>
<proteinExistence type="inferred from homology"/>
<evidence type="ECO:0000255" key="1">
    <source>
        <dbReference type="HAMAP-Rule" id="MF_00270"/>
    </source>
</evidence>
<evidence type="ECO:0000305" key="2"/>
<comment type="function">
    <text evidence="1">Binds as a heterodimer with protein bS6 to the central domain of the 16S rRNA, where it helps stabilize the platform of the 30S subunit.</text>
</comment>
<comment type="subunit">
    <text evidence="1">Part of the 30S ribosomal subunit. Forms a tight heterodimer with protein bS6.</text>
</comment>
<comment type="similarity">
    <text evidence="1">Belongs to the bacterial ribosomal protein bS18 family.</text>
</comment>
<accession>A1KUE8</accession>
<keyword id="KW-0687">Ribonucleoprotein</keyword>
<keyword id="KW-0689">Ribosomal protein</keyword>
<keyword id="KW-0694">RNA-binding</keyword>
<keyword id="KW-0699">rRNA-binding</keyword>
<organism>
    <name type="scientific">Neisseria meningitidis serogroup C / serotype 2a (strain ATCC 700532 / DSM 15464 / FAM18)</name>
    <dbReference type="NCBI Taxonomy" id="272831"/>
    <lineage>
        <taxon>Bacteria</taxon>
        <taxon>Pseudomonadati</taxon>
        <taxon>Pseudomonadota</taxon>
        <taxon>Betaproteobacteria</taxon>
        <taxon>Neisseriales</taxon>
        <taxon>Neisseriaceae</taxon>
        <taxon>Neisseria</taxon>
    </lineage>
</organism>
<name>RS18_NEIMF</name>
<reference key="1">
    <citation type="journal article" date="2007" name="PLoS Genet.">
        <title>Meningococcal genetic variation mechanisms viewed through comparative analysis of serogroup C strain FAM18.</title>
        <authorList>
            <person name="Bentley S.D."/>
            <person name="Vernikos G.S."/>
            <person name="Snyder L.A.S."/>
            <person name="Churcher C."/>
            <person name="Arrowsmith C."/>
            <person name="Chillingworth T."/>
            <person name="Cronin A."/>
            <person name="Davis P.H."/>
            <person name="Holroyd N.E."/>
            <person name="Jagels K."/>
            <person name="Maddison M."/>
            <person name="Moule S."/>
            <person name="Rabbinowitsch E."/>
            <person name="Sharp S."/>
            <person name="Unwin L."/>
            <person name="Whitehead S."/>
            <person name="Quail M.A."/>
            <person name="Achtman M."/>
            <person name="Barrell B.G."/>
            <person name="Saunders N.J."/>
            <person name="Parkhill J."/>
        </authorList>
    </citation>
    <scope>NUCLEOTIDE SEQUENCE [LARGE SCALE GENOMIC DNA]</scope>
    <source>
        <strain>ATCC 700532 / DSM 15464 / FAM18</strain>
    </source>
</reference>